<feature type="chain" id="PRO_0000393507" description="Probable D-xylulose reductase A">
    <location>
        <begin position="1"/>
        <end position="358"/>
    </location>
</feature>
<feature type="binding site" evidence="1">
    <location>
        <position position="47"/>
    </location>
    <ligand>
        <name>Zn(2+)</name>
        <dbReference type="ChEBI" id="CHEBI:29105"/>
        <note>catalytic</note>
    </ligand>
</feature>
<feature type="binding site" evidence="1">
    <location>
        <position position="72"/>
    </location>
    <ligand>
        <name>Zn(2+)</name>
        <dbReference type="ChEBI" id="CHEBI:29105"/>
        <note>catalytic</note>
    </ligand>
</feature>
<feature type="binding site" evidence="1">
    <location>
        <position position="73"/>
    </location>
    <ligand>
        <name>Zn(2+)</name>
        <dbReference type="ChEBI" id="CHEBI:29105"/>
        <note>catalytic</note>
    </ligand>
</feature>
<feature type="binding site" evidence="2">
    <location>
        <begin position="182"/>
        <end position="187"/>
    </location>
    <ligand>
        <name>NAD(+)</name>
        <dbReference type="ChEBI" id="CHEBI:57540"/>
    </ligand>
</feature>
<gene>
    <name type="primary">xdhA</name>
    <name type="ORF">AFUB_089090</name>
</gene>
<dbReference type="EC" id="1.1.1.9"/>
<dbReference type="EMBL" id="DS499601">
    <property type="protein sequence ID" value="EDP48196.1"/>
    <property type="status" value="ALT_SEQ"/>
    <property type="molecule type" value="Genomic_DNA"/>
</dbReference>
<dbReference type="SMR" id="B0YC65"/>
<dbReference type="OrthoDB" id="48535at5052"/>
<dbReference type="PhylomeDB" id="B0YC65"/>
<dbReference type="UniPathway" id="UPA00146">
    <property type="reaction ID" value="UER00577"/>
</dbReference>
<dbReference type="Proteomes" id="UP000001699">
    <property type="component" value="Unassembled WGS sequence"/>
</dbReference>
<dbReference type="GO" id="GO:0046526">
    <property type="term" value="F:D-xylulose reductase activity"/>
    <property type="evidence" value="ECO:0007669"/>
    <property type="project" value="UniProtKB-EC"/>
</dbReference>
<dbReference type="GO" id="GO:0003939">
    <property type="term" value="F:L-iditol 2-dehydrogenase (NAD+) activity"/>
    <property type="evidence" value="ECO:0007669"/>
    <property type="project" value="TreeGrafter"/>
</dbReference>
<dbReference type="GO" id="GO:0008270">
    <property type="term" value="F:zinc ion binding"/>
    <property type="evidence" value="ECO:0007669"/>
    <property type="project" value="InterPro"/>
</dbReference>
<dbReference type="GO" id="GO:0042732">
    <property type="term" value="P:D-xylose metabolic process"/>
    <property type="evidence" value="ECO:0007669"/>
    <property type="project" value="UniProtKB-KW"/>
</dbReference>
<dbReference type="GO" id="GO:0019569">
    <property type="term" value="P:L-arabinose catabolic process to xylulose 5-phosphate"/>
    <property type="evidence" value="ECO:0007669"/>
    <property type="project" value="UniProtKB-UniPathway"/>
</dbReference>
<dbReference type="GO" id="GO:0006062">
    <property type="term" value="P:sorbitol catabolic process"/>
    <property type="evidence" value="ECO:0007669"/>
    <property type="project" value="TreeGrafter"/>
</dbReference>
<dbReference type="CDD" id="cd05285">
    <property type="entry name" value="sorbitol_DH"/>
    <property type="match status" value="1"/>
</dbReference>
<dbReference type="FunFam" id="3.40.50.720:FF:000068">
    <property type="entry name" value="Sorbitol dehydrogenase"/>
    <property type="match status" value="1"/>
</dbReference>
<dbReference type="Gene3D" id="3.90.180.10">
    <property type="entry name" value="Medium-chain alcohol dehydrogenases, catalytic domain"/>
    <property type="match status" value="1"/>
</dbReference>
<dbReference type="Gene3D" id="3.40.50.720">
    <property type="entry name" value="NAD(P)-binding Rossmann-like Domain"/>
    <property type="match status" value="1"/>
</dbReference>
<dbReference type="InterPro" id="IPR013149">
    <property type="entry name" value="ADH-like_C"/>
</dbReference>
<dbReference type="InterPro" id="IPR013154">
    <property type="entry name" value="ADH-like_N"/>
</dbReference>
<dbReference type="InterPro" id="IPR002328">
    <property type="entry name" value="ADH_Zn_CS"/>
</dbReference>
<dbReference type="InterPro" id="IPR011032">
    <property type="entry name" value="GroES-like_sf"/>
</dbReference>
<dbReference type="InterPro" id="IPR036291">
    <property type="entry name" value="NAD(P)-bd_dom_sf"/>
</dbReference>
<dbReference type="InterPro" id="IPR020843">
    <property type="entry name" value="PKS_ER"/>
</dbReference>
<dbReference type="InterPro" id="IPR045306">
    <property type="entry name" value="SDH-like"/>
</dbReference>
<dbReference type="PANTHER" id="PTHR43161">
    <property type="entry name" value="SORBITOL DEHYDROGENASE"/>
    <property type="match status" value="1"/>
</dbReference>
<dbReference type="PANTHER" id="PTHR43161:SF9">
    <property type="entry name" value="SORBITOL DEHYDROGENASE"/>
    <property type="match status" value="1"/>
</dbReference>
<dbReference type="Pfam" id="PF08240">
    <property type="entry name" value="ADH_N"/>
    <property type="match status" value="1"/>
</dbReference>
<dbReference type="Pfam" id="PF00107">
    <property type="entry name" value="ADH_zinc_N"/>
    <property type="match status" value="1"/>
</dbReference>
<dbReference type="SMART" id="SM00829">
    <property type="entry name" value="PKS_ER"/>
    <property type="match status" value="1"/>
</dbReference>
<dbReference type="SUPFAM" id="SSF50129">
    <property type="entry name" value="GroES-like"/>
    <property type="match status" value="1"/>
</dbReference>
<dbReference type="SUPFAM" id="SSF51735">
    <property type="entry name" value="NAD(P)-binding Rossmann-fold domains"/>
    <property type="match status" value="1"/>
</dbReference>
<dbReference type="PROSITE" id="PS00059">
    <property type="entry name" value="ADH_ZINC"/>
    <property type="match status" value="1"/>
</dbReference>
<keyword id="KW-0119">Carbohydrate metabolism</keyword>
<keyword id="KW-0479">Metal-binding</keyword>
<keyword id="KW-0520">NAD</keyword>
<keyword id="KW-0560">Oxidoreductase</keyword>
<keyword id="KW-0859">Xylose metabolism</keyword>
<keyword id="KW-0862">Zinc</keyword>
<name>XYL2_ASPFC</name>
<accession>B0YC65</accession>
<sequence length="358" mass="37866">MSKSTATAQNLSFVLEGIHQVKFEDRPIPELKDPHDVLVNVKFTGICGSDVHYWEHGSIGQFVVKGPMVLGHESSGVISKVGSAVTGLKVGDRVAMEPGIPCRRCEPCKAGKYNLCEKMAFAATPPYDGTLAKFYVLPEDFCYKLPDNISLQEGALMEPLGVAVHIVKQASVTPGQSVIVFGAGPVGLLCCAVAKAFGAAKIIAVDIQKARLDFAKKYAATSTFEPAKVSAVDNADRLRKENNLGVGADVVIDASGAEPSVHTGIHVLRPGGTYVQGGMGRSEIMFPIMAACTKELAIKGSFRYGSGDYNLAVGLVASGKVNVKDLITGVVEFHDAEQAFKEVKAGKGIKTLIAGIQD</sequence>
<reference key="1">
    <citation type="journal article" date="2008" name="PLoS Genet.">
        <title>Genomic islands in the pathogenic filamentous fungus Aspergillus fumigatus.</title>
        <authorList>
            <person name="Fedorova N.D."/>
            <person name="Khaldi N."/>
            <person name="Joardar V.S."/>
            <person name="Maiti R."/>
            <person name="Amedeo P."/>
            <person name="Anderson M.J."/>
            <person name="Crabtree J."/>
            <person name="Silva J.C."/>
            <person name="Badger J.H."/>
            <person name="Albarraq A."/>
            <person name="Angiuoli S."/>
            <person name="Bussey H."/>
            <person name="Bowyer P."/>
            <person name="Cotty P.J."/>
            <person name="Dyer P.S."/>
            <person name="Egan A."/>
            <person name="Galens K."/>
            <person name="Fraser-Liggett C.M."/>
            <person name="Haas B.J."/>
            <person name="Inman J.M."/>
            <person name="Kent R."/>
            <person name="Lemieux S."/>
            <person name="Malavazi I."/>
            <person name="Orvis J."/>
            <person name="Roemer T."/>
            <person name="Ronning C.M."/>
            <person name="Sundaram J.P."/>
            <person name="Sutton G."/>
            <person name="Turner G."/>
            <person name="Venter J.C."/>
            <person name="White O.R."/>
            <person name="Whitty B.R."/>
            <person name="Youngman P."/>
            <person name="Wolfe K.H."/>
            <person name="Goldman G.H."/>
            <person name="Wortman J.R."/>
            <person name="Jiang B."/>
            <person name="Denning D.W."/>
            <person name="Nierman W.C."/>
        </authorList>
    </citation>
    <scope>NUCLEOTIDE SEQUENCE [LARGE SCALE GENOMIC DNA]</scope>
    <source>
        <strain>CBS 144.89 / FGSC A1163 / CEA10</strain>
    </source>
</reference>
<protein>
    <recommendedName>
        <fullName>Probable D-xylulose reductase A</fullName>
        <ecNumber>1.1.1.9</ecNumber>
    </recommendedName>
    <alternativeName>
        <fullName>Xylitol dehydrogenase A</fullName>
    </alternativeName>
</protein>
<evidence type="ECO:0000250" key="1"/>
<evidence type="ECO:0000255" key="2"/>
<evidence type="ECO:0000305" key="3"/>
<organism>
    <name type="scientific">Aspergillus fumigatus (strain CBS 144.89 / FGSC A1163 / CEA10)</name>
    <name type="common">Neosartorya fumigata</name>
    <dbReference type="NCBI Taxonomy" id="451804"/>
    <lineage>
        <taxon>Eukaryota</taxon>
        <taxon>Fungi</taxon>
        <taxon>Dikarya</taxon>
        <taxon>Ascomycota</taxon>
        <taxon>Pezizomycotina</taxon>
        <taxon>Eurotiomycetes</taxon>
        <taxon>Eurotiomycetidae</taxon>
        <taxon>Eurotiales</taxon>
        <taxon>Aspergillaceae</taxon>
        <taxon>Aspergillus</taxon>
        <taxon>Aspergillus subgen. Fumigati</taxon>
    </lineage>
</organism>
<proteinExistence type="inferred from homology"/>
<comment type="function">
    <text evidence="1">Xylitol dehydrogenase which catalyzes the conversion of xylitol to D-xylulose. Xylose is a major component of hemicelluloses such as xylan. Most fungi utilize D-xylose via three enzymatic reactions, xylose reductase (XR), xylitol dehydrogenase (XDH), and xylulokinase, to form xylulose 5-phosphate, which enters pentose phosphate pathway (By similarity).</text>
</comment>
<comment type="catalytic activity">
    <reaction>
        <text>xylitol + NAD(+) = D-xylulose + NADH + H(+)</text>
        <dbReference type="Rhea" id="RHEA:20433"/>
        <dbReference type="ChEBI" id="CHEBI:15378"/>
        <dbReference type="ChEBI" id="CHEBI:17140"/>
        <dbReference type="ChEBI" id="CHEBI:17151"/>
        <dbReference type="ChEBI" id="CHEBI:57540"/>
        <dbReference type="ChEBI" id="CHEBI:57945"/>
        <dbReference type="EC" id="1.1.1.9"/>
    </reaction>
</comment>
<comment type="cofactor">
    <cofactor evidence="1">
        <name>Zn(2+)</name>
        <dbReference type="ChEBI" id="CHEBI:29105"/>
    </cofactor>
    <text evidence="1">Binds 1 zinc ion per subunit.</text>
</comment>
<comment type="pathway">
    <text>Carbohydrate degradation; L-arabinose degradation via L-arabinitol; D-xylulose 5-phosphate from L-arabinose (fungal route): step 4/5.</text>
</comment>
<comment type="similarity">
    <text evidence="3">Belongs to the zinc-containing alcohol dehydrogenase family.</text>
</comment>
<comment type="sequence caution" evidence="3">
    <conflict type="erroneous gene model prediction">
        <sequence resource="EMBL-CDS" id="EDP48196"/>
    </conflict>
</comment>